<evidence type="ECO:0000255" key="1">
    <source>
        <dbReference type="HAMAP-Rule" id="MF_01813"/>
    </source>
</evidence>
<keyword id="KW-0474">Menaquinone biosynthesis</keyword>
<keyword id="KW-0489">Methyltransferase</keyword>
<keyword id="KW-0949">S-adenosyl-L-methionine</keyword>
<keyword id="KW-0808">Transferase</keyword>
<keyword id="KW-0831">Ubiquinone biosynthesis</keyword>
<accession>B0U6V1</accession>
<dbReference type="EC" id="2.1.1.163" evidence="1"/>
<dbReference type="EC" id="2.1.1.201" evidence="1"/>
<dbReference type="EMBL" id="CP000941">
    <property type="protein sequence ID" value="ACA11817.1"/>
    <property type="molecule type" value="Genomic_DNA"/>
</dbReference>
<dbReference type="RefSeq" id="WP_004083713.1">
    <property type="nucleotide sequence ID" value="NC_010513.1"/>
</dbReference>
<dbReference type="SMR" id="B0U6V1"/>
<dbReference type="KEGG" id="xfm:Xfasm12_0829"/>
<dbReference type="HOGENOM" id="CLU_037990_0_0_6"/>
<dbReference type="UniPathway" id="UPA00079">
    <property type="reaction ID" value="UER00169"/>
</dbReference>
<dbReference type="UniPathway" id="UPA00232"/>
<dbReference type="GO" id="GO:0008425">
    <property type="term" value="F:2-methoxy-6-polyprenyl-1,4-benzoquinol methyltransferase activity"/>
    <property type="evidence" value="ECO:0007669"/>
    <property type="project" value="UniProtKB-UniRule"/>
</dbReference>
<dbReference type="GO" id="GO:0043770">
    <property type="term" value="F:demethylmenaquinone methyltransferase activity"/>
    <property type="evidence" value="ECO:0007669"/>
    <property type="project" value="UniProtKB-UniRule"/>
</dbReference>
<dbReference type="GO" id="GO:0009060">
    <property type="term" value="P:aerobic respiration"/>
    <property type="evidence" value="ECO:0007669"/>
    <property type="project" value="UniProtKB-UniRule"/>
</dbReference>
<dbReference type="GO" id="GO:0009234">
    <property type="term" value="P:menaquinone biosynthetic process"/>
    <property type="evidence" value="ECO:0007669"/>
    <property type="project" value="UniProtKB-UniRule"/>
</dbReference>
<dbReference type="GO" id="GO:0032259">
    <property type="term" value="P:methylation"/>
    <property type="evidence" value="ECO:0007669"/>
    <property type="project" value="UniProtKB-KW"/>
</dbReference>
<dbReference type="CDD" id="cd02440">
    <property type="entry name" value="AdoMet_MTases"/>
    <property type="match status" value="1"/>
</dbReference>
<dbReference type="Gene3D" id="3.40.50.150">
    <property type="entry name" value="Vaccinia Virus protein VP39"/>
    <property type="match status" value="1"/>
</dbReference>
<dbReference type="HAMAP" id="MF_01813">
    <property type="entry name" value="MenG_UbiE_methyltr"/>
    <property type="match status" value="1"/>
</dbReference>
<dbReference type="InterPro" id="IPR029063">
    <property type="entry name" value="SAM-dependent_MTases_sf"/>
</dbReference>
<dbReference type="InterPro" id="IPR004033">
    <property type="entry name" value="UbiE/COQ5_MeTrFase"/>
</dbReference>
<dbReference type="InterPro" id="IPR023576">
    <property type="entry name" value="UbiE/COQ5_MeTrFase_CS"/>
</dbReference>
<dbReference type="NCBIfam" id="TIGR01934">
    <property type="entry name" value="MenG_MenH_UbiE"/>
    <property type="match status" value="1"/>
</dbReference>
<dbReference type="NCBIfam" id="NF001242">
    <property type="entry name" value="PRK00216.1-3"/>
    <property type="match status" value="1"/>
</dbReference>
<dbReference type="NCBIfam" id="NF001244">
    <property type="entry name" value="PRK00216.1-5"/>
    <property type="match status" value="1"/>
</dbReference>
<dbReference type="PANTHER" id="PTHR43591:SF24">
    <property type="entry name" value="2-METHOXY-6-POLYPRENYL-1,4-BENZOQUINOL METHYLASE, MITOCHONDRIAL"/>
    <property type="match status" value="1"/>
</dbReference>
<dbReference type="PANTHER" id="PTHR43591">
    <property type="entry name" value="METHYLTRANSFERASE"/>
    <property type="match status" value="1"/>
</dbReference>
<dbReference type="Pfam" id="PF01209">
    <property type="entry name" value="Ubie_methyltran"/>
    <property type="match status" value="1"/>
</dbReference>
<dbReference type="SUPFAM" id="SSF53335">
    <property type="entry name" value="S-adenosyl-L-methionine-dependent methyltransferases"/>
    <property type="match status" value="1"/>
</dbReference>
<dbReference type="PROSITE" id="PS51608">
    <property type="entry name" value="SAM_MT_UBIE"/>
    <property type="match status" value="1"/>
</dbReference>
<dbReference type="PROSITE" id="PS01183">
    <property type="entry name" value="UBIE_1"/>
    <property type="match status" value="1"/>
</dbReference>
<dbReference type="PROSITE" id="PS01184">
    <property type="entry name" value="UBIE_2"/>
    <property type="match status" value="1"/>
</dbReference>
<reference key="1">
    <citation type="journal article" date="2010" name="J. Bacteriol.">
        <title>Whole genome sequences of two Xylella fastidiosa strains (M12 and M23) causing almond leaf scorch disease in California.</title>
        <authorList>
            <person name="Chen J."/>
            <person name="Xie G."/>
            <person name="Han S."/>
            <person name="Chertkov O."/>
            <person name="Sims D."/>
            <person name="Civerolo E.L."/>
        </authorList>
    </citation>
    <scope>NUCLEOTIDE SEQUENCE [LARGE SCALE GENOMIC DNA]</scope>
    <source>
        <strain>M12</strain>
    </source>
</reference>
<comment type="function">
    <text evidence="1">Methyltransferase required for the conversion of demethylmenaquinol (DMKH2) to menaquinol (MKH2) and the conversion of 2-polyprenyl-6-methoxy-1,4-benzoquinol (DDMQH2) to 2-polyprenyl-3-methyl-6-methoxy-1,4-benzoquinol (DMQH2).</text>
</comment>
<comment type="catalytic activity">
    <reaction evidence="1">
        <text>a 2-demethylmenaquinol + S-adenosyl-L-methionine = a menaquinol + S-adenosyl-L-homocysteine + H(+)</text>
        <dbReference type="Rhea" id="RHEA:42640"/>
        <dbReference type="Rhea" id="RHEA-COMP:9539"/>
        <dbReference type="Rhea" id="RHEA-COMP:9563"/>
        <dbReference type="ChEBI" id="CHEBI:15378"/>
        <dbReference type="ChEBI" id="CHEBI:18151"/>
        <dbReference type="ChEBI" id="CHEBI:55437"/>
        <dbReference type="ChEBI" id="CHEBI:57856"/>
        <dbReference type="ChEBI" id="CHEBI:59789"/>
        <dbReference type="EC" id="2.1.1.163"/>
    </reaction>
</comment>
<comment type="catalytic activity">
    <reaction evidence="1">
        <text>a 2-methoxy-6-(all-trans-polyprenyl)benzene-1,4-diol + S-adenosyl-L-methionine = a 5-methoxy-2-methyl-3-(all-trans-polyprenyl)benzene-1,4-diol + S-adenosyl-L-homocysteine + H(+)</text>
        <dbReference type="Rhea" id="RHEA:28286"/>
        <dbReference type="Rhea" id="RHEA-COMP:10858"/>
        <dbReference type="Rhea" id="RHEA-COMP:10859"/>
        <dbReference type="ChEBI" id="CHEBI:15378"/>
        <dbReference type="ChEBI" id="CHEBI:57856"/>
        <dbReference type="ChEBI" id="CHEBI:59789"/>
        <dbReference type="ChEBI" id="CHEBI:84166"/>
        <dbReference type="ChEBI" id="CHEBI:84167"/>
        <dbReference type="EC" id="2.1.1.201"/>
    </reaction>
</comment>
<comment type="pathway">
    <text evidence="1">Quinol/quinone metabolism; menaquinone biosynthesis; menaquinol from 1,4-dihydroxy-2-naphthoate: step 2/2.</text>
</comment>
<comment type="pathway">
    <text evidence="1">Cofactor biosynthesis; ubiquinone biosynthesis.</text>
</comment>
<comment type="similarity">
    <text evidence="1">Belongs to the class I-like SAM-binding methyltransferase superfamily. MenG/UbiE family.</text>
</comment>
<organism>
    <name type="scientific">Xylella fastidiosa (strain M12)</name>
    <dbReference type="NCBI Taxonomy" id="405440"/>
    <lineage>
        <taxon>Bacteria</taxon>
        <taxon>Pseudomonadati</taxon>
        <taxon>Pseudomonadota</taxon>
        <taxon>Gammaproteobacteria</taxon>
        <taxon>Lysobacterales</taxon>
        <taxon>Lysobacteraceae</taxon>
        <taxon>Xylella</taxon>
    </lineage>
</organism>
<sequence>MSESSEKTSTTHFGFRQVAAKDKKTLVAEVFTSVSRRYDLMNDLMSLGIHRAWKRYFVATAQVKSGDRVLDLAGGTGDIAMLLKNRVGAEGSIVLGDINASMLSVGRDRLIDRGVVARLEYVQCNAEALPFQDKCFDLVTMSFGLRNVTDKDTALREMFRVLKVGGQARVLEFSTVTAEWFKPIYDFHSFQVLPRLGWLFARDAASYRYLAESIRKHPPQEELQAMMGAAGFERCGYRNLTGGIVAIHSGYKY</sequence>
<name>UBIE_XYLFM</name>
<proteinExistence type="inferred from homology"/>
<feature type="chain" id="PRO_1000187823" description="Ubiquinone/menaquinone biosynthesis C-methyltransferase UbiE">
    <location>
        <begin position="1"/>
        <end position="253"/>
    </location>
</feature>
<feature type="binding site" evidence="1">
    <location>
        <position position="76"/>
    </location>
    <ligand>
        <name>S-adenosyl-L-methionine</name>
        <dbReference type="ChEBI" id="CHEBI:59789"/>
    </ligand>
</feature>
<feature type="binding site" evidence="1">
    <location>
        <position position="97"/>
    </location>
    <ligand>
        <name>S-adenosyl-L-methionine</name>
        <dbReference type="ChEBI" id="CHEBI:59789"/>
    </ligand>
</feature>
<feature type="binding site" evidence="1">
    <location>
        <begin position="125"/>
        <end position="126"/>
    </location>
    <ligand>
        <name>S-adenosyl-L-methionine</name>
        <dbReference type="ChEBI" id="CHEBI:59789"/>
    </ligand>
</feature>
<feature type="binding site" evidence="1">
    <location>
        <position position="142"/>
    </location>
    <ligand>
        <name>S-adenosyl-L-methionine</name>
        <dbReference type="ChEBI" id="CHEBI:59789"/>
    </ligand>
</feature>
<protein>
    <recommendedName>
        <fullName evidence="1">Ubiquinone/menaquinone biosynthesis C-methyltransferase UbiE</fullName>
        <ecNumber evidence="1">2.1.1.163</ecNumber>
        <ecNumber evidence="1">2.1.1.201</ecNumber>
    </recommendedName>
    <alternativeName>
        <fullName evidence="1">2-methoxy-6-polyprenyl-1,4-benzoquinol methylase</fullName>
    </alternativeName>
    <alternativeName>
        <fullName evidence="1">Demethylmenaquinone methyltransferase</fullName>
    </alternativeName>
</protein>
<gene>
    <name evidence="1" type="primary">ubiE</name>
    <name type="ordered locus">Xfasm12_0829</name>
</gene>